<accession>Q8EZG6</accession>
<keyword id="KW-0963">Cytoplasm</keyword>
<keyword id="KW-0312">Gluconeogenesis</keyword>
<keyword id="KW-0324">Glycolysis</keyword>
<keyword id="KW-0413">Isomerase</keyword>
<keyword id="KW-1185">Reference proteome</keyword>
<organism>
    <name type="scientific">Leptospira interrogans serogroup Icterohaemorrhagiae serovar Lai (strain 56601)</name>
    <dbReference type="NCBI Taxonomy" id="189518"/>
    <lineage>
        <taxon>Bacteria</taxon>
        <taxon>Pseudomonadati</taxon>
        <taxon>Spirochaetota</taxon>
        <taxon>Spirochaetia</taxon>
        <taxon>Leptospirales</taxon>
        <taxon>Leptospiraceae</taxon>
        <taxon>Leptospira</taxon>
    </lineage>
</organism>
<name>G6PI_LEPIN</name>
<comment type="function">
    <text evidence="1">Catalyzes the reversible isomerization of glucose-6-phosphate to fructose-6-phosphate.</text>
</comment>
<comment type="catalytic activity">
    <reaction evidence="1">
        <text>alpha-D-glucose 6-phosphate = beta-D-fructose 6-phosphate</text>
        <dbReference type="Rhea" id="RHEA:11816"/>
        <dbReference type="ChEBI" id="CHEBI:57634"/>
        <dbReference type="ChEBI" id="CHEBI:58225"/>
        <dbReference type="EC" id="5.3.1.9"/>
    </reaction>
</comment>
<comment type="pathway">
    <text evidence="1">Carbohydrate biosynthesis; gluconeogenesis.</text>
</comment>
<comment type="pathway">
    <text evidence="1">Carbohydrate degradation; glycolysis; D-glyceraldehyde 3-phosphate and glycerone phosphate from D-glucose: step 2/4.</text>
</comment>
<comment type="subcellular location">
    <subcellularLocation>
        <location evidence="1">Cytoplasm</location>
    </subcellularLocation>
</comment>
<comment type="similarity">
    <text evidence="1">Belongs to the GPI family.</text>
</comment>
<dbReference type="EC" id="5.3.1.9" evidence="1"/>
<dbReference type="EMBL" id="AE010300">
    <property type="protein sequence ID" value="AAN51086.1"/>
    <property type="molecule type" value="Genomic_DNA"/>
</dbReference>
<dbReference type="RefSeq" id="NP_714068.1">
    <property type="nucleotide sequence ID" value="NC_004342.2"/>
</dbReference>
<dbReference type="RefSeq" id="WP_000620160.1">
    <property type="nucleotide sequence ID" value="NC_004342.2"/>
</dbReference>
<dbReference type="SMR" id="Q8EZG6"/>
<dbReference type="FunCoup" id="Q8EZG6">
    <property type="interactions" value="436"/>
</dbReference>
<dbReference type="STRING" id="189518.LA_3888"/>
<dbReference type="PaxDb" id="189518-LA_3888"/>
<dbReference type="EnsemblBacteria" id="AAN51086">
    <property type="protein sequence ID" value="AAN51086"/>
    <property type="gene ID" value="LA_3888"/>
</dbReference>
<dbReference type="KEGG" id="lil:LA_3888"/>
<dbReference type="PATRIC" id="fig|189518.3.peg.3855"/>
<dbReference type="HOGENOM" id="CLU_037303_0_1_12"/>
<dbReference type="InParanoid" id="Q8EZG6"/>
<dbReference type="OrthoDB" id="140919at2"/>
<dbReference type="UniPathway" id="UPA00109">
    <property type="reaction ID" value="UER00181"/>
</dbReference>
<dbReference type="UniPathway" id="UPA00138"/>
<dbReference type="Proteomes" id="UP000001408">
    <property type="component" value="Chromosome I"/>
</dbReference>
<dbReference type="GO" id="GO:0005829">
    <property type="term" value="C:cytosol"/>
    <property type="evidence" value="ECO:0000318"/>
    <property type="project" value="GO_Central"/>
</dbReference>
<dbReference type="GO" id="GO:0097367">
    <property type="term" value="F:carbohydrate derivative binding"/>
    <property type="evidence" value="ECO:0007669"/>
    <property type="project" value="InterPro"/>
</dbReference>
<dbReference type="GO" id="GO:0004347">
    <property type="term" value="F:glucose-6-phosphate isomerase activity"/>
    <property type="evidence" value="ECO:0000318"/>
    <property type="project" value="GO_Central"/>
</dbReference>
<dbReference type="GO" id="GO:0048029">
    <property type="term" value="F:monosaccharide binding"/>
    <property type="evidence" value="ECO:0000318"/>
    <property type="project" value="GO_Central"/>
</dbReference>
<dbReference type="GO" id="GO:0006094">
    <property type="term" value="P:gluconeogenesis"/>
    <property type="evidence" value="ECO:0000318"/>
    <property type="project" value="GO_Central"/>
</dbReference>
<dbReference type="GO" id="GO:0051156">
    <property type="term" value="P:glucose 6-phosphate metabolic process"/>
    <property type="evidence" value="ECO:0000318"/>
    <property type="project" value="GO_Central"/>
</dbReference>
<dbReference type="GO" id="GO:0006096">
    <property type="term" value="P:glycolytic process"/>
    <property type="evidence" value="ECO:0000318"/>
    <property type="project" value="GO_Central"/>
</dbReference>
<dbReference type="CDD" id="cd05015">
    <property type="entry name" value="SIS_PGI_1"/>
    <property type="match status" value="1"/>
</dbReference>
<dbReference type="CDD" id="cd05016">
    <property type="entry name" value="SIS_PGI_2"/>
    <property type="match status" value="1"/>
</dbReference>
<dbReference type="FunFam" id="3.40.50.10490:FF:000015">
    <property type="entry name" value="Glucose-6-phosphate isomerase"/>
    <property type="match status" value="1"/>
</dbReference>
<dbReference type="FunFam" id="3.40.50.10490:FF:000016">
    <property type="entry name" value="Glucose-6-phosphate isomerase"/>
    <property type="match status" value="1"/>
</dbReference>
<dbReference type="Gene3D" id="3.40.50.10490">
    <property type="entry name" value="Glucose-6-phosphate isomerase like protein, domain 1"/>
    <property type="match status" value="2"/>
</dbReference>
<dbReference type="HAMAP" id="MF_00473">
    <property type="entry name" value="G6P_isomerase"/>
    <property type="match status" value="1"/>
</dbReference>
<dbReference type="InterPro" id="IPR000210">
    <property type="entry name" value="BTB/POZ_dom"/>
</dbReference>
<dbReference type="InterPro" id="IPR001672">
    <property type="entry name" value="G6P_Isomerase"/>
</dbReference>
<dbReference type="InterPro" id="IPR018189">
    <property type="entry name" value="Phosphoglucose_isomerase_CS"/>
</dbReference>
<dbReference type="InterPro" id="IPR046348">
    <property type="entry name" value="SIS_dom_sf"/>
</dbReference>
<dbReference type="InterPro" id="IPR035476">
    <property type="entry name" value="SIS_PGI_1"/>
</dbReference>
<dbReference type="InterPro" id="IPR035482">
    <property type="entry name" value="SIS_PGI_2"/>
</dbReference>
<dbReference type="NCBIfam" id="NF010697">
    <property type="entry name" value="PRK14097.1"/>
    <property type="match status" value="1"/>
</dbReference>
<dbReference type="PANTHER" id="PTHR11469">
    <property type="entry name" value="GLUCOSE-6-PHOSPHATE ISOMERASE"/>
    <property type="match status" value="1"/>
</dbReference>
<dbReference type="PANTHER" id="PTHR11469:SF1">
    <property type="entry name" value="GLUCOSE-6-PHOSPHATE ISOMERASE"/>
    <property type="match status" value="1"/>
</dbReference>
<dbReference type="Pfam" id="PF00342">
    <property type="entry name" value="PGI"/>
    <property type="match status" value="1"/>
</dbReference>
<dbReference type="PRINTS" id="PR00662">
    <property type="entry name" value="G6PISOMERASE"/>
</dbReference>
<dbReference type="SUPFAM" id="SSF53697">
    <property type="entry name" value="SIS domain"/>
    <property type="match status" value="1"/>
</dbReference>
<dbReference type="PROSITE" id="PS00765">
    <property type="entry name" value="P_GLUCOSE_ISOMERASE_1"/>
    <property type="match status" value="1"/>
</dbReference>
<dbReference type="PROSITE" id="PS00174">
    <property type="entry name" value="P_GLUCOSE_ISOMERASE_2"/>
    <property type="match status" value="1"/>
</dbReference>
<dbReference type="PROSITE" id="PS51463">
    <property type="entry name" value="P_GLUCOSE_ISOMERASE_3"/>
    <property type="match status" value="1"/>
</dbReference>
<reference key="1">
    <citation type="journal article" date="2003" name="Nature">
        <title>Unique physiological and pathogenic features of Leptospira interrogans revealed by whole-genome sequencing.</title>
        <authorList>
            <person name="Ren S.-X."/>
            <person name="Fu G."/>
            <person name="Jiang X.-G."/>
            <person name="Zeng R."/>
            <person name="Miao Y.-G."/>
            <person name="Xu H."/>
            <person name="Zhang Y.-X."/>
            <person name="Xiong H."/>
            <person name="Lu G."/>
            <person name="Lu L.-F."/>
            <person name="Jiang H.-Q."/>
            <person name="Jia J."/>
            <person name="Tu Y.-F."/>
            <person name="Jiang J.-X."/>
            <person name="Gu W.-Y."/>
            <person name="Zhang Y.-Q."/>
            <person name="Cai Z."/>
            <person name="Sheng H.-H."/>
            <person name="Yin H.-F."/>
            <person name="Zhang Y."/>
            <person name="Zhu G.-F."/>
            <person name="Wan M."/>
            <person name="Huang H.-L."/>
            <person name="Qian Z."/>
            <person name="Wang S.-Y."/>
            <person name="Ma W."/>
            <person name="Yao Z.-J."/>
            <person name="Shen Y."/>
            <person name="Qiang B.-Q."/>
            <person name="Xia Q.-C."/>
            <person name="Guo X.-K."/>
            <person name="Danchin A."/>
            <person name="Saint Girons I."/>
            <person name="Somerville R.L."/>
            <person name="Wen Y.-M."/>
            <person name="Shi M.-H."/>
            <person name="Chen Z."/>
            <person name="Xu J.-G."/>
            <person name="Zhao G.-P."/>
        </authorList>
    </citation>
    <scope>NUCLEOTIDE SEQUENCE [LARGE SCALE GENOMIC DNA]</scope>
    <source>
        <strain>56601</strain>
    </source>
</reference>
<gene>
    <name evidence="1" type="primary">pgi</name>
    <name type="ordered locus">LA_3888</name>
</gene>
<protein>
    <recommendedName>
        <fullName evidence="1">Glucose-6-phosphate isomerase</fullName>
        <shortName evidence="1">GPI</shortName>
        <ecNumber evidence="1">5.3.1.9</ecNumber>
    </recommendedName>
    <alternativeName>
        <fullName evidence="1">Phosphoglucose isomerase</fullName>
        <shortName evidence="1">PGI</shortName>
    </alternativeName>
    <alternativeName>
        <fullName evidence="1">Phosphohexose isomerase</fullName>
        <shortName evidence="1">PHI</shortName>
    </alternativeName>
</protein>
<sequence length="445" mass="49735">MIRLETRFASSFIQSSKLEPFLEKSESARLTLHSSQGQGKEYLGWLYLPKELKNSEIERMTQVAERLRNSSEVIVVIGIGGSYLGSRAVLEATLPFFKKPSIGNPEIIFAGHHLESRYFSELIEYLEDKNFSINVISKSGTTTEPAIAFRLLWELLRKKYGSSASSRVVATTDSSKGVLKKFADSEKLDTFTIPDNVGGRYSVLTPVGLFPLAVAGISISKFILGFQNILNDIHSITDPTRNPATYYSALRNYFLSEGRYIEVLANFNPSLRYVSEWWKQLFGESEGKENKGIFPASMDFTTDLHSLGQYIQEGKRILFETVLSPSEVCSNLTLKPTQDNLDSLNFLSGNTLGYVNEQARLGTLLAHADGGVPCLELVFPDISPQSLGELMYFFEYSCAISGYSLGVNPFDQPGVEAYKKNMFALLNKPGFEQEGETLRKRISRN</sequence>
<feature type="chain" id="PRO_0000180665" description="Glucose-6-phosphate isomerase">
    <location>
        <begin position="1"/>
        <end position="445"/>
    </location>
</feature>
<feature type="active site" description="Proton donor" evidence="1">
    <location>
        <position position="284"/>
    </location>
</feature>
<feature type="active site" evidence="1">
    <location>
        <position position="305"/>
    </location>
</feature>
<feature type="active site" evidence="1">
    <location>
        <position position="419"/>
    </location>
</feature>
<proteinExistence type="inferred from homology"/>
<evidence type="ECO:0000255" key="1">
    <source>
        <dbReference type="HAMAP-Rule" id="MF_00473"/>
    </source>
</evidence>